<name>RL332_STRPC</name>
<accession>Q1JJM4</accession>
<protein>
    <recommendedName>
        <fullName evidence="1">Large ribosomal subunit protein bL33B</fullName>
    </recommendedName>
    <alternativeName>
        <fullName evidence="1">50S ribosomal protein L33 2</fullName>
    </alternativeName>
</protein>
<dbReference type="EMBL" id="CP000259">
    <property type="protein sequence ID" value="ABF32949.1"/>
    <property type="molecule type" value="Genomic_DNA"/>
</dbReference>
<dbReference type="SMR" id="Q1JJM4"/>
<dbReference type="KEGG" id="spk:MGAS9429_Spy1762"/>
<dbReference type="HOGENOM" id="CLU_190949_0_1_9"/>
<dbReference type="Proteomes" id="UP000002433">
    <property type="component" value="Chromosome"/>
</dbReference>
<dbReference type="GO" id="GO:0005737">
    <property type="term" value="C:cytoplasm"/>
    <property type="evidence" value="ECO:0007669"/>
    <property type="project" value="UniProtKB-ARBA"/>
</dbReference>
<dbReference type="GO" id="GO:1990904">
    <property type="term" value="C:ribonucleoprotein complex"/>
    <property type="evidence" value="ECO:0007669"/>
    <property type="project" value="UniProtKB-KW"/>
</dbReference>
<dbReference type="GO" id="GO:0005840">
    <property type="term" value="C:ribosome"/>
    <property type="evidence" value="ECO:0007669"/>
    <property type="project" value="UniProtKB-KW"/>
</dbReference>
<dbReference type="GO" id="GO:0003735">
    <property type="term" value="F:structural constituent of ribosome"/>
    <property type="evidence" value="ECO:0007669"/>
    <property type="project" value="InterPro"/>
</dbReference>
<dbReference type="GO" id="GO:0006412">
    <property type="term" value="P:translation"/>
    <property type="evidence" value="ECO:0007669"/>
    <property type="project" value="UniProtKB-UniRule"/>
</dbReference>
<dbReference type="Gene3D" id="2.20.28.120">
    <property type="entry name" value="Ribosomal protein L33"/>
    <property type="match status" value="1"/>
</dbReference>
<dbReference type="HAMAP" id="MF_00294">
    <property type="entry name" value="Ribosomal_bL33"/>
    <property type="match status" value="1"/>
</dbReference>
<dbReference type="InterPro" id="IPR001705">
    <property type="entry name" value="Ribosomal_bL33"/>
</dbReference>
<dbReference type="InterPro" id="IPR038584">
    <property type="entry name" value="Ribosomal_bL33_sf"/>
</dbReference>
<dbReference type="InterPro" id="IPR011332">
    <property type="entry name" value="Ribosomal_zn-bd"/>
</dbReference>
<dbReference type="NCBIfam" id="NF001764">
    <property type="entry name" value="PRK00504.1"/>
    <property type="match status" value="1"/>
</dbReference>
<dbReference type="NCBIfam" id="TIGR01023">
    <property type="entry name" value="rpmG_bact"/>
    <property type="match status" value="1"/>
</dbReference>
<dbReference type="Pfam" id="PF00471">
    <property type="entry name" value="Ribosomal_L33"/>
    <property type="match status" value="1"/>
</dbReference>
<dbReference type="SUPFAM" id="SSF57829">
    <property type="entry name" value="Zn-binding ribosomal proteins"/>
    <property type="match status" value="1"/>
</dbReference>
<evidence type="ECO:0000255" key="1">
    <source>
        <dbReference type="HAMAP-Rule" id="MF_00294"/>
    </source>
</evidence>
<sequence length="50" mass="5658">MAQKKASLACVECGSRNYSIGVSSTPKPTRLEVNKFCKYCKTYTLHKETR</sequence>
<proteinExistence type="inferred from homology"/>
<organism>
    <name type="scientific">Streptococcus pyogenes serotype M12 (strain MGAS9429)</name>
    <dbReference type="NCBI Taxonomy" id="370551"/>
    <lineage>
        <taxon>Bacteria</taxon>
        <taxon>Bacillati</taxon>
        <taxon>Bacillota</taxon>
        <taxon>Bacilli</taxon>
        <taxon>Lactobacillales</taxon>
        <taxon>Streptococcaceae</taxon>
        <taxon>Streptococcus</taxon>
    </lineage>
</organism>
<reference key="1">
    <citation type="journal article" date="2006" name="Proc. Natl. Acad. Sci. U.S.A.">
        <title>Molecular genetic anatomy of inter- and intraserotype variation in the human bacterial pathogen group A Streptococcus.</title>
        <authorList>
            <person name="Beres S.B."/>
            <person name="Richter E.W."/>
            <person name="Nagiec M.J."/>
            <person name="Sumby P."/>
            <person name="Porcella S.F."/>
            <person name="DeLeo F.R."/>
            <person name="Musser J.M."/>
        </authorList>
    </citation>
    <scope>NUCLEOTIDE SEQUENCE [LARGE SCALE GENOMIC DNA]</scope>
    <source>
        <strain>MGAS9429</strain>
    </source>
</reference>
<comment type="similarity">
    <text evidence="1">Belongs to the bacterial ribosomal protein bL33 family.</text>
</comment>
<keyword id="KW-0687">Ribonucleoprotein</keyword>
<keyword id="KW-0689">Ribosomal protein</keyword>
<gene>
    <name evidence="1" type="primary">rpmG2</name>
    <name type="ordered locus">MGAS9429_Spy1762</name>
</gene>
<feature type="chain" id="PRO_0000356723" description="Large ribosomal subunit protein bL33B">
    <location>
        <begin position="1"/>
        <end position="50"/>
    </location>
</feature>